<dbReference type="EMBL" id="BX936398">
    <property type="protein sequence ID" value="CAH19746.1"/>
    <property type="molecule type" value="Genomic_DNA"/>
</dbReference>
<dbReference type="RefSeq" id="WP_011191642.1">
    <property type="nucleotide sequence ID" value="NC_006155.1"/>
</dbReference>
<dbReference type="SMR" id="Q66F34"/>
<dbReference type="GeneID" id="49787492"/>
<dbReference type="KEGG" id="ypo:BZ17_2057"/>
<dbReference type="KEGG" id="yps:YPTB0506"/>
<dbReference type="PATRIC" id="fig|273123.14.peg.2184"/>
<dbReference type="Proteomes" id="UP000001011">
    <property type="component" value="Chromosome"/>
</dbReference>
<dbReference type="Gene3D" id="2.30.110.10">
    <property type="entry name" value="Electron Transport, Fmn-binding Protein, Chain A"/>
    <property type="match status" value="1"/>
</dbReference>
<dbReference type="HAMAP" id="MF_00764">
    <property type="entry name" value="UPF0306"/>
    <property type="match status" value="1"/>
</dbReference>
<dbReference type="InterPro" id="IPR012349">
    <property type="entry name" value="Split_barrel_FMN-bd"/>
</dbReference>
<dbReference type="InterPro" id="IPR011194">
    <property type="entry name" value="UPF0306"/>
</dbReference>
<dbReference type="NCBIfam" id="NF002900">
    <property type="entry name" value="PRK03467.1"/>
    <property type="match status" value="1"/>
</dbReference>
<dbReference type="PIRSF" id="PIRSF009554">
    <property type="entry name" value="UCP009554"/>
    <property type="match status" value="1"/>
</dbReference>
<dbReference type="SUPFAM" id="SSF50475">
    <property type="entry name" value="FMN-binding split barrel"/>
    <property type="match status" value="1"/>
</dbReference>
<gene>
    <name type="ordered locus">YPTB0506</name>
</gene>
<organism>
    <name type="scientific">Yersinia pseudotuberculosis serotype I (strain IP32953)</name>
    <dbReference type="NCBI Taxonomy" id="273123"/>
    <lineage>
        <taxon>Bacteria</taxon>
        <taxon>Pseudomonadati</taxon>
        <taxon>Pseudomonadota</taxon>
        <taxon>Gammaproteobacteria</taxon>
        <taxon>Enterobacterales</taxon>
        <taxon>Yersiniaceae</taxon>
        <taxon>Yersinia</taxon>
    </lineage>
</organism>
<feature type="chain" id="PRO_1000046790" description="UPF0306 protein YPTB0506">
    <location>
        <begin position="1"/>
        <end position="147"/>
    </location>
</feature>
<sequence length="147" mass="16698">MNNPDDVLLINRFLRQQHVLTLCAGSGMDMWCASCFYVFDENQMALFLMTEKHTRHSELMLINPQVAGTVATQSRTIALIKGIQYRGDISLLSGDAEQAARNRYCRRFPVAKVSSAPLWQLNLLEIKMTNNALGFGKKLHWSRVEPL</sequence>
<accession>Q66F34</accession>
<name>Y506_YERPS</name>
<protein>
    <recommendedName>
        <fullName evidence="1">UPF0306 protein YPTB0506</fullName>
    </recommendedName>
</protein>
<reference key="1">
    <citation type="journal article" date="2004" name="Proc. Natl. Acad. Sci. U.S.A.">
        <title>Insights into the evolution of Yersinia pestis through whole-genome comparison with Yersinia pseudotuberculosis.</title>
        <authorList>
            <person name="Chain P.S.G."/>
            <person name="Carniel E."/>
            <person name="Larimer F.W."/>
            <person name="Lamerdin J."/>
            <person name="Stoutland P.O."/>
            <person name="Regala W.M."/>
            <person name="Georgescu A.M."/>
            <person name="Vergez L.M."/>
            <person name="Land M.L."/>
            <person name="Motin V.L."/>
            <person name="Brubaker R.R."/>
            <person name="Fowler J."/>
            <person name="Hinnebusch J."/>
            <person name="Marceau M."/>
            <person name="Medigue C."/>
            <person name="Simonet M."/>
            <person name="Chenal-Francisque V."/>
            <person name="Souza B."/>
            <person name="Dacheux D."/>
            <person name="Elliott J.M."/>
            <person name="Derbise A."/>
            <person name="Hauser L.J."/>
            <person name="Garcia E."/>
        </authorList>
    </citation>
    <scope>NUCLEOTIDE SEQUENCE [LARGE SCALE GENOMIC DNA]</scope>
    <source>
        <strain>IP32953</strain>
    </source>
</reference>
<proteinExistence type="inferred from homology"/>
<comment type="similarity">
    <text evidence="1">Belongs to the UPF0306 family.</text>
</comment>
<evidence type="ECO:0000255" key="1">
    <source>
        <dbReference type="HAMAP-Rule" id="MF_00764"/>
    </source>
</evidence>